<reference key="1">
    <citation type="journal article" date="2006" name="Proc. Natl. Acad. Sci. U.S.A.">
        <title>Evolution of sensory complexity recorded in a myxobacterial genome.</title>
        <authorList>
            <person name="Goldman B.S."/>
            <person name="Nierman W.C."/>
            <person name="Kaiser D."/>
            <person name="Slater S.C."/>
            <person name="Durkin A.S."/>
            <person name="Eisen J.A."/>
            <person name="Ronning C.M."/>
            <person name="Barbazuk W.B."/>
            <person name="Blanchard M."/>
            <person name="Field C."/>
            <person name="Halling C."/>
            <person name="Hinkle G."/>
            <person name="Iartchuk O."/>
            <person name="Kim H.S."/>
            <person name="Mackenzie C."/>
            <person name="Madupu R."/>
            <person name="Miller N."/>
            <person name="Shvartsbeyn A."/>
            <person name="Sullivan S.A."/>
            <person name="Vaudin M."/>
            <person name="Wiegand R."/>
            <person name="Kaplan H.B."/>
        </authorList>
    </citation>
    <scope>NUCLEOTIDE SEQUENCE [LARGE SCALE GENOMIC DNA]</scope>
    <source>
        <strain>DK1622</strain>
    </source>
</reference>
<keyword id="KW-0021">Allosteric enzyme</keyword>
<keyword id="KW-0328">Glycosyltransferase</keyword>
<keyword id="KW-0342">GTP-binding</keyword>
<keyword id="KW-0460">Magnesium</keyword>
<keyword id="KW-0547">Nucleotide-binding</keyword>
<keyword id="KW-1185">Reference proteome</keyword>
<keyword id="KW-0808">Transferase</keyword>
<accession>Q1DG16</accession>
<protein>
    <recommendedName>
        <fullName evidence="1">Uracil phosphoribosyltransferase</fullName>
        <ecNumber evidence="1">2.4.2.9</ecNumber>
    </recommendedName>
    <alternativeName>
        <fullName evidence="1">UMP pyrophosphorylase</fullName>
    </alternativeName>
    <alternativeName>
        <fullName evidence="1">UPRTase</fullName>
    </alternativeName>
</protein>
<gene>
    <name evidence="1" type="primary">upp</name>
    <name type="ordered locus">MXAN_0124</name>
</gene>
<organism>
    <name type="scientific">Myxococcus xanthus (strain DK1622)</name>
    <dbReference type="NCBI Taxonomy" id="246197"/>
    <lineage>
        <taxon>Bacteria</taxon>
        <taxon>Pseudomonadati</taxon>
        <taxon>Myxococcota</taxon>
        <taxon>Myxococcia</taxon>
        <taxon>Myxococcales</taxon>
        <taxon>Cystobacterineae</taxon>
        <taxon>Myxococcaceae</taxon>
        <taxon>Myxococcus</taxon>
    </lineage>
</organism>
<proteinExistence type="inferred from homology"/>
<comment type="function">
    <text evidence="1">Catalyzes the conversion of uracil and 5-phospho-alpha-D-ribose 1-diphosphate (PRPP) to UMP and diphosphate.</text>
</comment>
<comment type="catalytic activity">
    <reaction evidence="1">
        <text>UMP + diphosphate = 5-phospho-alpha-D-ribose 1-diphosphate + uracil</text>
        <dbReference type="Rhea" id="RHEA:13017"/>
        <dbReference type="ChEBI" id="CHEBI:17568"/>
        <dbReference type="ChEBI" id="CHEBI:33019"/>
        <dbReference type="ChEBI" id="CHEBI:57865"/>
        <dbReference type="ChEBI" id="CHEBI:58017"/>
        <dbReference type="EC" id="2.4.2.9"/>
    </reaction>
</comment>
<comment type="cofactor">
    <cofactor evidence="1">
        <name>Mg(2+)</name>
        <dbReference type="ChEBI" id="CHEBI:18420"/>
    </cofactor>
    <text evidence="1">Binds 1 Mg(2+) ion per subunit. The magnesium is bound as Mg-PRPP.</text>
</comment>
<comment type="activity regulation">
    <text evidence="1">Allosterically activated by GTP.</text>
</comment>
<comment type="pathway">
    <text evidence="1">Pyrimidine metabolism; UMP biosynthesis via salvage pathway; UMP from uracil: step 1/1.</text>
</comment>
<comment type="similarity">
    <text evidence="1">Belongs to the UPRTase family.</text>
</comment>
<sequence length="211" mass="23337">MEFPNCTVVDHPLVKHKLTQMRRVETSTASFRALLQEISLLLAYEALRDLKVREEDIQTPMARTVAPVLDGKKLVLVAIMRAGQGILDGMLQLVPSARVGHIGLYRDPETLSPVEYYYRVPGQLADRDVVVCDPMLATGNSAVAALQRLKKSKPGSLRFVCLLACPEGLTNLREHHPDVHVYTAAIDERLDEHGYILPGLGDAGDRLFGTK</sequence>
<dbReference type="EC" id="2.4.2.9" evidence="1"/>
<dbReference type="EMBL" id="CP000113">
    <property type="protein sequence ID" value="ABF86250.1"/>
    <property type="molecule type" value="Genomic_DNA"/>
</dbReference>
<dbReference type="RefSeq" id="WP_011550271.1">
    <property type="nucleotide sequence ID" value="NC_008095.1"/>
</dbReference>
<dbReference type="SMR" id="Q1DG16"/>
<dbReference type="STRING" id="246197.MXAN_0124"/>
<dbReference type="EnsemblBacteria" id="ABF86250">
    <property type="protein sequence ID" value="ABF86250"/>
    <property type="gene ID" value="MXAN_0124"/>
</dbReference>
<dbReference type="GeneID" id="41357629"/>
<dbReference type="KEGG" id="mxa:MXAN_0124"/>
<dbReference type="eggNOG" id="COG0035">
    <property type="taxonomic scope" value="Bacteria"/>
</dbReference>
<dbReference type="HOGENOM" id="CLU_067096_2_2_7"/>
<dbReference type="OrthoDB" id="9781675at2"/>
<dbReference type="UniPathway" id="UPA00574">
    <property type="reaction ID" value="UER00636"/>
</dbReference>
<dbReference type="Proteomes" id="UP000002402">
    <property type="component" value="Chromosome"/>
</dbReference>
<dbReference type="GO" id="GO:0005525">
    <property type="term" value="F:GTP binding"/>
    <property type="evidence" value="ECO:0007669"/>
    <property type="project" value="UniProtKB-KW"/>
</dbReference>
<dbReference type="GO" id="GO:0000287">
    <property type="term" value="F:magnesium ion binding"/>
    <property type="evidence" value="ECO:0007669"/>
    <property type="project" value="UniProtKB-UniRule"/>
</dbReference>
<dbReference type="GO" id="GO:0004845">
    <property type="term" value="F:uracil phosphoribosyltransferase activity"/>
    <property type="evidence" value="ECO:0007669"/>
    <property type="project" value="UniProtKB-UniRule"/>
</dbReference>
<dbReference type="GO" id="GO:0044206">
    <property type="term" value="P:UMP salvage"/>
    <property type="evidence" value="ECO:0007669"/>
    <property type="project" value="UniProtKB-UniRule"/>
</dbReference>
<dbReference type="GO" id="GO:0006223">
    <property type="term" value="P:uracil salvage"/>
    <property type="evidence" value="ECO:0007669"/>
    <property type="project" value="InterPro"/>
</dbReference>
<dbReference type="CDD" id="cd06223">
    <property type="entry name" value="PRTases_typeI"/>
    <property type="match status" value="1"/>
</dbReference>
<dbReference type="FunFam" id="3.40.50.2020:FF:000003">
    <property type="entry name" value="Uracil phosphoribosyltransferase"/>
    <property type="match status" value="1"/>
</dbReference>
<dbReference type="Gene3D" id="3.40.50.2020">
    <property type="match status" value="1"/>
</dbReference>
<dbReference type="HAMAP" id="MF_01218_B">
    <property type="entry name" value="Upp_B"/>
    <property type="match status" value="1"/>
</dbReference>
<dbReference type="InterPro" id="IPR000836">
    <property type="entry name" value="PRibTrfase_dom"/>
</dbReference>
<dbReference type="InterPro" id="IPR029057">
    <property type="entry name" value="PRTase-like"/>
</dbReference>
<dbReference type="InterPro" id="IPR034332">
    <property type="entry name" value="Upp_B"/>
</dbReference>
<dbReference type="InterPro" id="IPR050054">
    <property type="entry name" value="UPRTase/APRTase"/>
</dbReference>
<dbReference type="InterPro" id="IPR005765">
    <property type="entry name" value="Ura_phspho_trans"/>
</dbReference>
<dbReference type="NCBIfam" id="NF001097">
    <property type="entry name" value="PRK00129.1"/>
    <property type="match status" value="1"/>
</dbReference>
<dbReference type="NCBIfam" id="TIGR01091">
    <property type="entry name" value="upp"/>
    <property type="match status" value="1"/>
</dbReference>
<dbReference type="PANTHER" id="PTHR32315">
    <property type="entry name" value="ADENINE PHOSPHORIBOSYLTRANSFERASE"/>
    <property type="match status" value="1"/>
</dbReference>
<dbReference type="PANTHER" id="PTHR32315:SF4">
    <property type="entry name" value="URACIL PHOSPHORIBOSYLTRANSFERASE, CHLOROPLASTIC"/>
    <property type="match status" value="1"/>
</dbReference>
<dbReference type="Pfam" id="PF14681">
    <property type="entry name" value="UPRTase"/>
    <property type="match status" value="1"/>
</dbReference>
<dbReference type="SUPFAM" id="SSF53271">
    <property type="entry name" value="PRTase-like"/>
    <property type="match status" value="1"/>
</dbReference>
<feature type="chain" id="PRO_1000053746" description="Uracil phosphoribosyltransferase">
    <location>
        <begin position="1"/>
        <end position="211"/>
    </location>
</feature>
<feature type="binding site" evidence="1">
    <location>
        <position position="81"/>
    </location>
    <ligand>
        <name>5-phospho-alpha-D-ribose 1-diphosphate</name>
        <dbReference type="ChEBI" id="CHEBI:58017"/>
    </ligand>
</feature>
<feature type="binding site" evidence="1">
    <location>
        <position position="106"/>
    </location>
    <ligand>
        <name>5-phospho-alpha-D-ribose 1-diphosphate</name>
        <dbReference type="ChEBI" id="CHEBI:58017"/>
    </ligand>
</feature>
<feature type="binding site" evidence="1">
    <location>
        <begin position="133"/>
        <end position="141"/>
    </location>
    <ligand>
        <name>5-phospho-alpha-D-ribose 1-diphosphate</name>
        <dbReference type="ChEBI" id="CHEBI:58017"/>
    </ligand>
</feature>
<feature type="binding site" evidence="1">
    <location>
        <position position="196"/>
    </location>
    <ligand>
        <name>uracil</name>
        <dbReference type="ChEBI" id="CHEBI:17568"/>
    </ligand>
</feature>
<feature type="binding site" evidence="1">
    <location>
        <begin position="201"/>
        <end position="203"/>
    </location>
    <ligand>
        <name>uracil</name>
        <dbReference type="ChEBI" id="CHEBI:17568"/>
    </ligand>
</feature>
<feature type="binding site" evidence="1">
    <location>
        <position position="202"/>
    </location>
    <ligand>
        <name>5-phospho-alpha-D-ribose 1-diphosphate</name>
        <dbReference type="ChEBI" id="CHEBI:58017"/>
    </ligand>
</feature>
<evidence type="ECO:0000255" key="1">
    <source>
        <dbReference type="HAMAP-Rule" id="MF_01218"/>
    </source>
</evidence>
<name>UPP_MYXXD</name>